<keyword id="KW-0614">Plasmid</keyword>
<dbReference type="EMBL" id="X05121">
    <property type="protein sequence ID" value="CAA28769.1"/>
    <property type="molecule type" value="Genomic_DNA"/>
</dbReference>
<dbReference type="PIR" id="S07280">
    <property type="entry name" value="S07280"/>
</dbReference>
<dbReference type="RefSeq" id="WP_032488309.1">
    <property type="nucleotide sequence ID" value="NZ_VTZQ01000003.1"/>
</dbReference>
<dbReference type="SMR" id="P07175"/>
<dbReference type="CDD" id="cd02042">
    <property type="entry name" value="ParAB_family"/>
    <property type="match status" value="1"/>
</dbReference>
<dbReference type="Gene3D" id="3.40.50.300">
    <property type="entry name" value="P-loop containing nucleotide triphosphate hydrolases"/>
    <property type="match status" value="1"/>
</dbReference>
<dbReference type="InterPro" id="IPR050678">
    <property type="entry name" value="DNA_Partitioning_ATPase"/>
</dbReference>
<dbReference type="InterPro" id="IPR027417">
    <property type="entry name" value="P-loop_NTPase"/>
</dbReference>
<dbReference type="InterPro" id="IPR009744">
    <property type="entry name" value="VirC1"/>
</dbReference>
<dbReference type="PANTHER" id="PTHR13696:SF96">
    <property type="entry name" value="COBQ_COBB_MIND_PARA NUCLEOTIDE BINDING DOMAIN-CONTAINING PROTEIN"/>
    <property type="match status" value="1"/>
</dbReference>
<dbReference type="PANTHER" id="PTHR13696">
    <property type="entry name" value="P-LOOP CONTAINING NUCLEOSIDE TRIPHOSPHATE HYDROLASE"/>
    <property type="match status" value="1"/>
</dbReference>
<dbReference type="Pfam" id="PF07015">
    <property type="entry name" value="VirC1"/>
    <property type="match status" value="1"/>
</dbReference>
<dbReference type="PIRSF" id="PIRSF009320">
    <property type="entry name" value="Nuc_binding_HP_1000"/>
    <property type="match status" value="1"/>
</dbReference>
<dbReference type="SUPFAM" id="SSF52540">
    <property type="entry name" value="P-loop containing nucleoside triphosphate hydrolases"/>
    <property type="match status" value="1"/>
</dbReference>
<reference key="1">
    <citation type="journal article" date="1987" name="J. Mol. Biol.">
        <title>Agrobacterium tumefaciens pTAR parA promoter region involved in autoregulation, incompatibility and plasmid partitioning.</title>
        <authorList>
            <person name="Gallie D.R."/>
            <person name="Kado C.I."/>
        </authorList>
    </citation>
    <scope>NUCLEOTIDE SEQUENCE [GENOMIC DNA]</scope>
</reference>
<proteinExistence type="predicted"/>
<sequence>MPVVVVASSKGGAGKSTTAVVLGTELAHKGVPVTMLDCDPNRSLTIWANAGEVPENITALSDVTESSIVKTIKQHDVDGAVVIVDLEGVASRMVSRAISQADLVLIPMRPKALDATIGAQSLQLIAEEEEAIDRKIAHAVVFTMVSPAIRSHEYTGIKASLIENGVEIIEPPLVERTAYSALFQFGGNLHSMKSKQGNMAAAIENAEAFAMAIFKKLTEALR</sequence>
<protein>
    <recommendedName>
        <fullName>Protein ParA</fullName>
    </recommendedName>
</protein>
<name>PARA_RHIRD</name>
<organism>
    <name type="scientific">Rhizobium radiobacter</name>
    <name type="common">Agrobacterium tumefaciens</name>
    <name type="synonym">Agrobacterium radiobacter</name>
    <dbReference type="NCBI Taxonomy" id="358"/>
    <lineage>
        <taxon>Bacteria</taxon>
        <taxon>Pseudomonadati</taxon>
        <taxon>Pseudomonadota</taxon>
        <taxon>Alphaproteobacteria</taxon>
        <taxon>Hyphomicrobiales</taxon>
        <taxon>Rhizobiaceae</taxon>
        <taxon>Rhizobium/Agrobacterium group</taxon>
        <taxon>Agrobacterium</taxon>
        <taxon>Agrobacterium tumefaciens complex</taxon>
    </lineage>
</organism>
<geneLocation type="plasmid">
    <name>pTAR</name>
</geneLocation>
<accession>P07175</accession>
<feature type="chain" id="PRO_0000058232" description="Protein ParA">
    <location>
        <begin position="1"/>
        <end position="222"/>
    </location>
</feature>
<gene>
    <name type="primary">parA</name>
</gene>